<dbReference type="EC" id="2.7.4.3" evidence="1"/>
<dbReference type="EMBL" id="CP000647">
    <property type="protein sequence ID" value="ABR75908.1"/>
    <property type="molecule type" value="Genomic_DNA"/>
</dbReference>
<dbReference type="RefSeq" id="WP_002892184.1">
    <property type="nucleotide sequence ID" value="NC_009648.1"/>
</dbReference>
<dbReference type="SMR" id="A6T5N7"/>
<dbReference type="STRING" id="272620.KPN_00456"/>
<dbReference type="jPOST" id="A6T5N7"/>
<dbReference type="PaxDb" id="272620-KPN_00456"/>
<dbReference type="EnsemblBacteria" id="ABR75908">
    <property type="protein sequence ID" value="ABR75908"/>
    <property type="gene ID" value="KPN_00456"/>
</dbReference>
<dbReference type="GeneID" id="93274641"/>
<dbReference type="KEGG" id="kpn:KPN_00456"/>
<dbReference type="HOGENOM" id="CLU_032354_1_2_6"/>
<dbReference type="UniPathway" id="UPA00588">
    <property type="reaction ID" value="UER00649"/>
</dbReference>
<dbReference type="Proteomes" id="UP000000265">
    <property type="component" value="Chromosome"/>
</dbReference>
<dbReference type="GO" id="GO:0005737">
    <property type="term" value="C:cytoplasm"/>
    <property type="evidence" value="ECO:0007669"/>
    <property type="project" value="UniProtKB-SubCell"/>
</dbReference>
<dbReference type="GO" id="GO:0004017">
    <property type="term" value="F:adenylate kinase activity"/>
    <property type="evidence" value="ECO:0007669"/>
    <property type="project" value="UniProtKB-UniRule"/>
</dbReference>
<dbReference type="GO" id="GO:0005524">
    <property type="term" value="F:ATP binding"/>
    <property type="evidence" value="ECO:0007669"/>
    <property type="project" value="UniProtKB-UniRule"/>
</dbReference>
<dbReference type="GO" id="GO:0044209">
    <property type="term" value="P:AMP salvage"/>
    <property type="evidence" value="ECO:0007669"/>
    <property type="project" value="UniProtKB-UniRule"/>
</dbReference>
<dbReference type="CDD" id="cd01428">
    <property type="entry name" value="ADK"/>
    <property type="match status" value="1"/>
</dbReference>
<dbReference type="FunFam" id="3.40.50.300:FF:000106">
    <property type="entry name" value="Adenylate kinase mitochondrial"/>
    <property type="match status" value="1"/>
</dbReference>
<dbReference type="Gene3D" id="3.40.50.300">
    <property type="entry name" value="P-loop containing nucleotide triphosphate hydrolases"/>
    <property type="match status" value="1"/>
</dbReference>
<dbReference type="HAMAP" id="MF_00235">
    <property type="entry name" value="Adenylate_kinase_Adk"/>
    <property type="match status" value="1"/>
</dbReference>
<dbReference type="InterPro" id="IPR006259">
    <property type="entry name" value="Adenyl_kin_sub"/>
</dbReference>
<dbReference type="InterPro" id="IPR000850">
    <property type="entry name" value="Adenylat/UMP-CMP_kin"/>
</dbReference>
<dbReference type="InterPro" id="IPR033690">
    <property type="entry name" value="Adenylat_kinase_CS"/>
</dbReference>
<dbReference type="InterPro" id="IPR007862">
    <property type="entry name" value="Adenylate_kinase_lid-dom"/>
</dbReference>
<dbReference type="InterPro" id="IPR027417">
    <property type="entry name" value="P-loop_NTPase"/>
</dbReference>
<dbReference type="NCBIfam" id="TIGR01351">
    <property type="entry name" value="adk"/>
    <property type="match status" value="1"/>
</dbReference>
<dbReference type="NCBIfam" id="NF001379">
    <property type="entry name" value="PRK00279.1-1"/>
    <property type="match status" value="1"/>
</dbReference>
<dbReference type="NCBIfam" id="NF001380">
    <property type="entry name" value="PRK00279.1-2"/>
    <property type="match status" value="1"/>
</dbReference>
<dbReference type="NCBIfam" id="NF001381">
    <property type="entry name" value="PRK00279.1-3"/>
    <property type="match status" value="1"/>
</dbReference>
<dbReference type="NCBIfam" id="NF011100">
    <property type="entry name" value="PRK14527.1"/>
    <property type="match status" value="1"/>
</dbReference>
<dbReference type="PANTHER" id="PTHR23359">
    <property type="entry name" value="NUCLEOTIDE KINASE"/>
    <property type="match status" value="1"/>
</dbReference>
<dbReference type="Pfam" id="PF00406">
    <property type="entry name" value="ADK"/>
    <property type="match status" value="1"/>
</dbReference>
<dbReference type="Pfam" id="PF05191">
    <property type="entry name" value="ADK_lid"/>
    <property type="match status" value="1"/>
</dbReference>
<dbReference type="PRINTS" id="PR00094">
    <property type="entry name" value="ADENYLTKNASE"/>
</dbReference>
<dbReference type="SUPFAM" id="SSF52540">
    <property type="entry name" value="P-loop containing nucleoside triphosphate hydrolases"/>
    <property type="match status" value="1"/>
</dbReference>
<dbReference type="PROSITE" id="PS00113">
    <property type="entry name" value="ADENYLATE_KINASE"/>
    <property type="match status" value="1"/>
</dbReference>
<sequence length="214" mass="23548">MRIILLGAPGAGKGTQAQFIMEKYGIPQISTGDMLRAAVKSGSELGKQAKDIMDAGKLVTDELVIALVKERIAQEDCRNGFLLDGFPRTIPQADAMKEAGITVDYVLEFDVPDELIVDRIVGRRVHAASGRVYHIKFNPPKVEGKDDVTGEELTTRKDDQEETVRKRLVEYHQMTAPLIGYYTKEAQAGNTKYAKVDGTKAVADVRAELEKILG</sequence>
<protein>
    <recommendedName>
        <fullName evidence="1">Adenylate kinase</fullName>
        <shortName evidence="1">AK</shortName>
        <ecNumber evidence="1">2.7.4.3</ecNumber>
    </recommendedName>
    <alternativeName>
        <fullName evidence="1">ATP-AMP transphosphorylase</fullName>
    </alternativeName>
    <alternativeName>
        <fullName evidence="1">ATP:AMP phosphotransferase</fullName>
    </alternativeName>
    <alternativeName>
        <fullName evidence="1">Adenylate monophosphate kinase</fullName>
    </alternativeName>
</protein>
<feature type="chain" id="PRO_1000058845" description="Adenylate kinase">
    <location>
        <begin position="1"/>
        <end position="214"/>
    </location>
</feature>
<feature type="region of interest" description="NMP" evidence="1">
    <location>
        <begin position="30"/>
        <end position="59"/>
    </location>
</feature>
<feature type="region of interest" description="LID">
    <location>
        <begin position="122"/>
        <end position="159"/>
    </location>
</feature>
<feature type="binding site" evidence="1">
    <location>
        <begin position="10"/>
        <end position="15"/>
    </location>
    <ligand>
        <name>ATP</name>
        <dbReference type="ChEBI" id="CHEBI:30616"/>
    </ligand>
</feature>
<feature type="binding site" evidence="1">
    <location>
        <position position="31"/>
    </location>
    <ligand>
        <name>AMP</name>
        <dbReference type="ChEBI" id="CHEBI:456215"/>
    </ligand>
</feature>
<feature type="binding site" evidence="1">
    <location>
        <position position="36"/>
    </location>
    <ligand>
        <name>AMP</name>
        <dbReference type="ChEBI" id="CHEBI:456215"/>
    </ligand>
</feature>
<feature type="binding site" evidence="1">
    <location>
        <begin position="57"/>
        <end position="59"/>
    </location>
    <ligand>
        <name>AMP</name>
        <dbReference type="ChEBI" id="CHEBI:456215"/>
    </ligand>
</feature>
<feature type="binding site" evidence="1">
    <location>
        <begin position="85"/>
        <end position="88"/>
    </location>
    <ligand>
        <name>AMP</name>
        <dbReference type="ChEBI" id="CHEBI:456215"/>
    </ligand>
</feature>
<feature type="binding site" evidence="1">
    <location>
        <position position="92"/>
    </location>
    <ligand>
        <name>AMP</name>
        <dbReference type="ChEBI" id="CHEBI:456215"/>
    </ligand>
</feature>
<feature type="binding site" evidence="1">
    <location>
        <position position="123"/>
    </location>
    <ligand>
        <name>ATP</name>
        <dbReference type="ChEBI" id="CHEBI:30616"/>
    </ligand>
</feature>
<feature type="binding site" evidence="1">
    <location>
        <begin position="132"/>
        <end position="133"/>
    </location>
    <ligand>
        <name>ATP</name>
        <dbReference type="ChEBI" id="CHEBI:30616"/>
    </ligand>
</feature>
<feature type="binding site" evidence="1">
    <location>
        <position position="156"/>
    </location>
    <ligand>
        <name>AMP</name>
        <dbReference type="ChEBI" id="CHEBI:456215"/>
    </ligand>
</feature>
<feature type="binding site" evidence="1">
    <location>
        <position position="167"/>
    </location>
    <ligand>
        <name>AMP</name>
        <dbReference type="ChEBI" id="CHEBI:456215"/>
    </ligand>
</feature>
<feature type="binding site" evidence="1">
    <location>
        <position position="200"/>
    </location>
    <ligand>
        <name>ATP</name>
        <dbReference type="ChEBI" id="CHEBI:30616"/>
    </ligand>
</feature>
<proteinExistence type="inferred from homology"/>
<keyword id="KW-0067">ATP-binding</keyword>
<keyword id="KW-0963">Cytoplasm</keyword>
<keyword id="KW-0418">Kinase</keyword>
<keyword id="KW-0545">Nucleotide biosynthesis</keyword>
<keyword id="KW-0547">Nucleotide-binding</keyword>
<keyword id="KW-0808">Transferase</keyword>
<organism>
    <name type="scientific">Klebsiella pneumoniae subsp. pneumoniae (strain ATCC 700721 / MGH 78578)</name>
    <dbReference type="NCBI Taxonomy" id="272620"/>
    <lineage>
        <taxon>Bacteria</taxon>
        <taxon>Pseudomonadati</taxon>
        <taxon>Pseudomonadota</taxon>
        <taxon>Gammaproteobacteria</taxon>
        <taxon>Enterobacterales</taxon>
        <taxon>Enterobacteriaceae</taxon>
        <taxon>Klebsiella/Raoultella group</taxon>
        <taxon>Klebsiella</taxon>
        <taxon>Klebsiella pneumoniae complex</taxon>
    </lineage>
</organism>
<accession>A6T5N7</accession>
<name>KAD_KLEP7</name>
<comment type="function">
    <text evidence="1">Catalyzes the reversible transfer of the terminal phosphate group between ATP and AMP. Plays an important role in cellular energy homeostasis and in adenine nucleotide metabolism.</text>
</comment>
<comment type="catalytic activity">
    <reaction evidence="1">
        <text>AMP + ATP = 2 ADP</text>
        <dbReference type="Rhea" id="RHEA:12973"/>
        <dbReference type="ChEBI" id="CHEBI:30616"/>
        <dbReference type="ChEBI" id="CHEBI:456215"/>
        <dbReference type="ChEBI" id="CHEBI:456216"/>
        <dbReference type="EC" id="2.7.4.3"/>
    </reaction>
</comment>
<comment type="pathway">
    <text evidence="1">Purine metabolism; AMP biosynthesis via salvage pathway; AMP from ADP: step 1/1.</text>
</comment>
<comment type="subunit">
    <text evidence="1">Monomer.</text>
</comment>
<comment type="subcellular location">
    <subcellularLocation>
        <location evidence="1">Cytoplasm</location>
    </subcellularLocation>
</comment>
<comment type="domain">
    <text evidence="1">Consists of three domains, a large central CORE domain and two small peripheral domains, NMPbind and LID, which undergo movements during catalysis. The LID domain closes over the site of phosphoryl transfer upon ATP binding. Assembling and dissambling the active center during each catalytic cycle provides an effective means to prevent ATP hydrolysis.</text>
</comment>
<comment type="similarity">
    <text evidence="1">Belongs to the adenylate kinase family.</text>
</comment>
<evidence type="ECO:0000255" key="1">
    <source>
        <dbReference type="HAMAP-Rule" id="MF_00235"/>
    </source>
</evidence>
<gene>
    <name evidence="1" type="primary">adk</name>
    <name type="ordered locus">KPN78578_04470</name>
    <name type="ORF">KPN_00456</name>
</gene>
<reference key="1">
    <citation type="submission" date="2006-09" db="EMBL/GenBank/DDBJ databases">
        <authorList>
            <consortium name="The Klebsiella pneumonia Genome Sequencing Project"/>
            <person name="McClelland M."/>
            <person name="Sanderson E.K."/>
            <person name="Spieth J."/>
            <person name="Clifton W.S."/>
            <person name="Latreille P."/>
            <person name="Sabo A."/>
            <person name="Pepin K."/>
            <person name="Bhonagiri V."/>
            <person name="Porwollik S."/>
            <person name="Ali J."/>
            <person name="Wilson R.K."/>
        </authorList>
    </citation>
    <scope>NUCLEOTIDE SEQUENCE [LARGE SCALE GENOMIC DNA]</scope>
    <source>
        <strain>ATCC 700721 / MGH 78578</strain>
    </source>
</reference>